<sequence length="590" mass="66437">MKMSEVPRIKVFRPTWEEFKDFPKYVAYMESQGAHKAGLAKVVPPPEWVPRRSGYADLDALNVTIPAPICQVVTGKQGYYQQINIQKKPLTVKQFSELASTERYATPKHFDFEDLERKYWKNITYVAPIYGADVSGSITDTDQDSWNINRLGTILDYVNKDYNIQIDGVNTAYLYFGMWKTTFAWHTEDMDLYSINYLHFGAPKTWYVVPPECGRKLEKVANQYFPASYKNCNAYLRHKMTLISPQILKQHDVPVSKITQEAGEIMITFPFGYHAGFNHGFNCAESTNFAMERWIEYGKRAVQCTCSNDMVKISMDTFVKRFQSDRYDLWMEGRDVGRHPEDPPNAVLSAAPLPPHLDVLLCDKKMKKQCNPTKAKSFKERNPDLDLDEIQQNPNVPDDVKAMLKESVLTLDTGDLATDEADFPNEDAMSLQSPANLKTKQELLEYIDDGTEDDDEEEDFKRRKQKRRYDADYDDDWLASKRKTNSRNNRGRSPRTKDDRSISPASSTSSTSRGARRGKASGTPRKTPARRKKDSITTSPAVSSAATAVKTPTSAVVAGTTSIATTTTPPADGGGGESSSLGSHCTTASP</sequence>
<dbReference type="EC" id="1.14.11.66" evidence="3"/>
<dbReference type="EMBL" id="AE013599">
    <property type="protein sequence ID" value="AAF58413.3"/>
    <property type="molecule type" value="Genomic_DNA"/>
</dbReference>
<dbReference type="RefSeq" id="NP_001163137.1">
    <property type="nucleotide sequence ID" value="NM_001169666.2"/>
</dbReference>
<dbReference type="RefSeq" id="NP_001163138.1">
    <property type="nucleotide sequence ID" value="NM_001169667.2"/>
</dbReference>
<dbReference type="RefSeq" id="NP_001163139.1">
    <property type="nucleotide sequence ID" value="NM_001169668.2"/>
</dbReference>
<dbReference type="RefSeq" id="NP_788344.2">
    <property type="nucleotide sequence ID" value="NM_176164.4"/>
</dbReference>
<dbReference type="SMR" id="Q9V6L0"/>
<dbReference type="BioGRID" id="77204">
    <property type="interactions" value="5"/>
</dbReference>
<dbReference type="FunCoup" id="Q9V6L0">
    <property type="interactions" value="620"/>
</dbReference>
<dbReference type="STRING" id="7227.FBpp0302636"/>
<dbReference type="GlyGen" id="Q9V6L0">
    <property type="glycosylation" value="4 sites, 1 O-linked glycan (4 sites)"/>
</dbReference>
<dbReference type="PaxDb" id="7227-FBpp0302636"/>
<dbReference type="EnsemblMetazoa" id="FBtr0087770">
    <property type="protein sequence ID" value="FBpp0086883"/>
    <property type="gene ID" value="FBgn0053182"/>
</dbReference>
<dbReference type="EnsemblMetazoa" id="FBtr0302052">
    <property type="protein sequence ID" value="FBpp0291262"/>
    <property type="gene ID" value="FBgn0053182"/>
</dbReference>
<dbReference type="EnsemblMetazoa" id="FBtr0302053">
    <property type="protein sequence ID" value="FBpp0291263"/>
    <property type="gene ID" value="FBgn0053182"/>
</dbReference>
<dbReference type="EnsemblMetazoa" id="FBtr0302054">
    <property type="protein sequence ID" value="FBpp0291264"/>
    <property type="gene ID" value="FBgn0053182"/>
</dbReference>
<dbReference type="GeneID" id="318918"/>
<dbReference type="KEGG" id="dme:Dmel_CG33182"/>
<dbReference type="UCSC" id="CG33182-RA">
    <property type="organism name" value="d. melanogaster"/>
</dbReference>
<dbReference type="AGR" id="FB:FBgn0053182"/>
<dbReference type="CTD" id="23030"/>
<dbReference type="FlyBase" id="FBgn0053182">
    <property type="gene designation" value="Kdm4B"/>
</dbReference>
<dbReference type="VEuPathDB" id="VectorBase:FBgn0053182"/>
<dbReference type="eggNOG" id="KOG0958">
    <property type="taxonomic scope" value="Eukaryota"/>
</dbReference>
<dbReference type="GeneTree" id="ENSGT00940000154930"/>
<dbReference type="HOGENOM" id="CLU_001442_6_2_1"/>
<dbReference type="InParanoid" id="Q9V6L0"/>
<dbReference type="OrthoDB" id="9547406at2759"/>
<dbReference type="PhylomeDB" id="Q9V6L0"/>
<dbReference type="BRENDA" id="1.14.11.66">
    <property type="organism ID" value="1994"/>
</dbReference>
<dbReference type="BRENDA" id="1.14.11.67">
    <property type="organism ID" value="1994"/>
</dbReference>
<dbReference type="BRENDA" id="1.14.11.69">
    <property type="organism ID" value="1994"/>
</dbReference>
<dbReference type="Reactome" id="R-DME-5625886">
    <property type="pathway name" value="Activated PKN1 stimulates transcription of AR (androgen receptor) regulated genes KLK2 and KLK3"/>
</dbReference>
<dbReference type="Reactome" id="R-DME-5693565">
    <property type="pathway name" value="Recruitment and ATM-mediated phosphorylation of repair and signaling proteins at DNA double strand breaks"/>
</dbReference>
<dbReference type="Reactome" id="R-DME-9018519">
    <property type="pathway name" value="Estrogen-dependent gene expression"/>
</dbReference>
<dbReference type="BioGRID-ORCS" id="318918">
    <property type="hits" value="0 hits in 3 CRISPR screens"/>
</dbReference>
<dbReference type="ChiTaRS" id="Kdm4B">
    <property type="organism name" value="fly"/>
</dbReference>
<dbReference type="GenomeRNAi" id="318918"/>
<dbReference type="PRO" id="PR:Q9V6L0"/>
<dbReference type="Proteomes" id="UP000000803">
    <property type="component" value="Chromosome 2R"/>
</dbReference>
<dbReference type="Bgee" id="FBgn0053182">
    <property type="expression patterns" value="Expressed in midgut large flat cell (Drosophila) in digestive tract and 262 other cell types or tissues"/>
</dbReference>
<dbReference type="ExpressionAtlas" id="Q9V6L0">
    <property type="expression patterns" value="baseline and differential"/>
</dbReference>
<dbReference type="GO" id="GO:0000785">
    <property type="term" value="C:chromatin"/>
    <property type="evidence" value="ECO:0000318"/>
    <property type="project" value="GO_Central"/>
</dbReference>
<dbReference type="GO" id="GO:0005634">
    <property type="term" value="C:nucleus"/>
    <property type="evidence" value="ECO:0000314"/>
    <property type="project" value="FlyBase"/>
</dbReference>
<dbReference type="GO" id="GO:0051864">
    <property type="term" value="F:histone H3K36 demethylase activity"/>
    <property type="evidence" value="ECO:0000250"/>
    <property type="project" value="UniProtKB"/>
</dbReference>
<dbReference type="GO" id="GO:0140681">
    <property type="term" value="F:histone H3K36me2/H3K36me3 demethylase activity"/>
    <property type="evidence" value="ECO:0000314"/>
    <property type="project" value="FlyBase"/>
</dbReference>
<dbReference type="GO" id="GO:0032454">
    <property type="term" value="F:histone H3K9 demethylase activity"/>
    <property type="evidence" value="ECO:0000318"/>
    <property type="project" value="GO_Central"/>
</dbReference>
<dbReference type="GO" id="GO:0140684">
    <property type="term" value="F:histone H3K9me2/H3K9me3 demethylase activity"/>
    <property type="evidence" value="ECO:0000314"/>
    <property type="project" value="FlyBase"/>
</dbReference>
<dbReference type="GO" id="GO:0046872">
    <property type="term" value="F:metal ion binding"/>
    <property type="evidence" value="ECO:0007669"/>
    <property type="project" value="UniProtKB-KW"/>
</dbReference>
<dbReference type="GO" id="GO:0006338">
    <property type="term" value="P:chromatin remodeling"/>
    <property type="evidence" value="ECO:0000318"/>
    <property type="project" value="GO_Central"/>
</dbReference>
<dbReference type="GO" id="GO:0048512">
    <property type="term" value="P:circadian behavior"/>
    <property type="evidence" value="ECO:0000315"/>
    <property type="project" value="UniProtKB"/>
</dbReference>
<dbReference type="GO" id="GO:0045892">
    <property type="term" value="P:negative regulation of DNA-templated transcription"/>
    <property type="evidence" value="ECO:0000250"/>
    <property type="project" value="UniProtKB"/>
</dbReference>
<dbReference type="GO" id="GO:0010468">
    <property type="term" value="P:regulation of gene expression"/>
    <property type="evidence" value="ECO:0000318"/>
    <property type="project" value="GO_Central"/>
</dbReference>
<dbReference type="FunFam" id="2.60.120.650:FF:000048">
    <property type="entry name" value="Lysine-specific demethylase 4A"/>
    <property type="match status" value="1"/>
</dbReference>
<dbReference type="Gene3D" id="2.60.120.650">
    <property type="entry name" value="Cupin"/>
    <property type="match status" value="1"/>
</dbReference>
<dbReference type="InterPro" id="IPR003347">
    <property type="entry name" value="JmjC_dom"/>
</dbReference>
<dbReference type="InterPro" id="IPR003349">
    <property type="entry name" value="JmjN"/>
</dbReference>
<dbReference type="PANTHER" id="PTHR10694">
    <property type="entry name" value="LYSINE-SPECIFIC DEMETHYLASE"/>
    <property type="match status" value="1"/>
</dbReference>
<dbReference type="PANTHER" id="PTHR10694:SF129">
    <property type="entry name" value="LYSINE-SPECIFIC DEMETHYLASE 4B-RELATED"/>
    <property type="match status" value="1"/>
</dbReference>
<dbReference type="Pfam" id="PF02373">
    <property type="entry name" value="JmjC"/>
    <property type="match status" value="1"/>
</dbReference>
<dbReference type="Pfam" id="PF02375">
    <property type="entry name" value="JmjN"/>
    <property type="match status" value="1"/>
</dbReference>
<dbReference type="SMART" id="SM00558">
    <property type="entry name" value="JmjC"/>
    <property type="match status" value="1"/>
</dbReference>
<dbReference type="SMART" id="SM00545">
    <property type="entry name" value="JmjN"/>
    <property type="match status" value="1"/>
</dbReference>
<dbReference type="SUPFAM" id="SSF51197">
    <property type="entry name" value="Clavaminate synthase-like"/>
    <property type="match status" value="1"/>
</dbReference>
<dbReference type="PROSITE" id="PS51184">
    <property type="entry name" value="JMJC"/>
    <property type="match status" value="1"/>
</dbReference>
<dbReference type="PROSITE" id="PS51183">
    <property type="entry name" value="JMJN"/>
    <property type="match status" value="1"/>
</dbReference>
<name>KDM4B_DROME</name>
<reference key="1">
    <citation type="journal article" date="2000" name="Science">
        <title>The genome sequence of Drosophila melanogaster.</title>
        <authorList>
            <person name="Adams M.D."/>
            <person name="Celniker S.E."/>
            <person name="Holt R.A."/>
            <person name="Evans C.A."/>
            <person name="Gocayne J.D."/>
            <person name="Amanatides P.G."/>
            <person name="Scherer S.E."/>
            <person name="Li P.W."/>
            <person name="Hoskins R.A."/>
            <person name="Galle R.F."/>
            <person name="George R.A."/>
            <person name="Lewis S.E."/>
            <person name="Richards S."/>
            <person name="Ashburner M."/>
            <person name="Henderson S.N."/>
            <person name="Sutton G.G."/>
            <person name="Wortman J.R."/>
            <person name="Yandell M.D."/>
            <person name="Zhang Q."/>
            <person name="Chen L.X."/>
            <person name="Brandon R.C."/>
            <person name="Rogers Y.-H.C."/>
            <person name="Blazej R.G."/>
            <person name="Champe M."/>
            <person name="Pfeiffer B.D."/>
            <person name="Wan K.H."/>
            <person name="Doyle C."/>
            <person name="Baxter E.G."/>
            <person name="Helt G."/>
            <person name="Nelson C.R."/>
            <person name="Miklos G.L.G."/>
            <person name="Abril J.F."/>
            <person name="Agbayani A."/>
            <person name="An H.-J."/>
            <person name="Andrews-Pfannkoch C."/>
            <person name="Baldwin D."/>
            <person name="Ballew R.M."/>
            <person name="Basu A."/>
            <person name="Baxendale J."/>
            <person name="Bayraktaroglu L."/>
            <person name="Beasley E.M."/>
            <person name="Beeson K.Y."/>
            <person name="Benos P.V."/>
            <person name="Berman B.P."/>
            <person name="Bhandari D."/>
            <person name="Bolshakov S."/>
            <person name="Borkova D."/>
            <person name="Botchan M.R."/>
            <person name="Bouck J."/>
            <person name="Brokstein P."/>
            <person name="Brottier P."/>
            <person name="Burtis K.C."/>
            <person name="Busam D.A."/>
            <person name="Butler H."/>
            <person name="Cadieu E."/>
            <person name="Center A."/>
            <person name="Chandra I."/>
            <person name="Cherry J.M."/>
            <person name="Cawley S."/>
            <person name="Dahlke C."/>
            <person name="Davenport L.B."/>
            <person name="Davies P."/>
            <person name="de Pablos B."/>
            <person name="Delcher A."/>
            <person name="Deng Z."/>
            <person name="Mays A.D."/>
            <person name="Dew I."/>
            <person name="Dietz S.M."/>
            <person name="Dodson K."/>
            <person name="Doup L.E."/>
            <person name="Downes M."/>
            <person name="Dugan-Rocha S."/>
            <person name="Dunkov B.C."/>
            <person name="Dunn P."/>
            <person name="Durbin K.J."/>
            <person name="Evangelista C.C."/>
            <person name="Ferraz C."/>
            <person name="Ferriera S."/>
            <person name="Fleischmann W."/>
            <person name="Fosler C."/>
            <person name="Gabrielian A.E."/>
            <person name="Garg N.S."/>
            <person name="Gelbart W.M."/>
            <person name="Glasser K."/>
            <person name="Glodek A."/>
            <person name="Gong F."/>
            <person name="Gorrell J.H."/>
            <person name="Gu Z."/>
            <person name="Guan P."/>
            <person name="Harris M."/>
            <person name="Harris N.L."/>
            <person name="Harvey D.A."/>
            <person name="Heiman T.J."/>
            <person name="Hernandez J.R."/>
            <person name="Houck J."/>
            <person name="Hostin D."/>
            <person name="Houston K.A."/>
            <person name="Howland T.J."/>
            <person name="Wei M.-H."/>
            <person name="Ibegwam C."/>
            <person name="Jalali M."/>
            <person name="Kalush F."/>
            <person name="Karpen G.H."/>
            <person name="Ke Z."/>
            <person name="Kennison J.A."/>
            <person name="Ketchum K.A."/>
            <person name="Kimmel B.E."/>
            <person name="Kodira C.D."/>
            <person name="Kraft C.L."/>
            <person name="Kravitz S."/>
            <person name="Kulp D."/>
            <person name="Lai Z."/>
            <person name="Lasko P."/>
            <person name="Lei Y."/>
            <person name="Levitsky A.A."/>
            <person name="Li J.H."/>
            <person name="Li Z."/>
            <person name="Liang Y."/>
            <person name="Lin X."/>
            <person name="Liu X."/>
            <person name="Mattei B."/>
            <person name="McIntosh T.C."/>
            <person name="McLeod M.P."/>
            <person name="McPherson D."/>
            <person name="Merkulov G."/>
            <person name="Milshina N.V."/>
            <person name="Mobarry C."/>
            <person name="Morris J."/>
            <person name="Moshrefi A."/>
            <person name="Mount S.M."/>
            <person name="Moy M."/>
            <person name="Murphy B."/>
            <person name="Murphy L."/>
            <person name="Muzny D.M."/>
            <person name="Nelson D.L."/>
            <person name="Nelson D.R."/>
            <person name="Nelson K.A."/>
            <person name="Nixon K."/>
            <person name="Nusskern D.R."/>
            <person name="Pacleb J.M."/>
            <person name="Palazzolo M."/>
            <person name="Pittman G.S."/>
            <person name="Pan S."/>
            <person name="Pollard J."/>
            <person name="Puri V."/>
            <person name="Reese M.G."/>
            <person name="Reinert K."/>
            <person name="Remington K."/>
            <person name="Saunders R.D.C."/>
            <person name="Scheeler F."/>
            <person name="Shen H."/>
            <person name="Shue B.C."/>
            <person name="Siden-Kiamos I."/>
            <person name="Simpson M."/>
            <person name="Skupski M.P."/>
            <person name="Smith T.J."/>
            <person name="Spier E."/>
            <person name="Spradling A.C."/>
            <person name="Stapleton M."/>
            <person name="Strong R."/>
            <person name="Sun E."/>
            <person name="Svirskas R."/>
            <person name="Tector C."/>
            <person name="Turner R."/>
            <person name="Venter E."/>
            <person name="Wang A.H."/>
            <person name="Wang X."/>
            <person name="Wang Z.-Y."/>
            <person name="Wassarman D.A."/>
            <person name="Weinstock G.M."/>
            <person name="Weissenbach J."/>
            <person name="Williams S.M."/>
            <person name="Woodage T."/>
            <person name="Worley K.C."/>
            <person name="Wu D."/>
            <person name="Yang S."/>
            <person name="Yao Q.A."/>
            <person name="Ye J."/>
            <person name="Yeh R.-F."/>
            <person name="Zaveri J.S."/>
            <person name="Zhan M."/>
            <person name="Zhang G."/>
            <person name="Zhao Q."/>
            <person name="Zheng L."/>
            <person name="Zheng X.H."/>
            <person name="Zhong F.N."/>
            <person name="Zhong W."/>
            <person name="Zhou X."/>
            <person name="Zhu S.C."/>
            <person name="Zhu X."/>
            <person name="Smith H.O."/>
            <person name="Gibbs R.A."/>
            <person name="Myers E.W."/>
            <person name="Rubin G.M."/>
            <person name="Venter J.C."/>
        </authorList>
    </citation>
    <scope>NUCLEOTIDE SEQUENCE [LARGE SCALE GENOMIC DNA]</scope>
    <source>
        <strain>Berkeley</strain>
    </source>
</reference>
<reference key="2">
    <citation type="journal article" date="2002" name="Genome Biol.">
        <title>Annotation of the Drosophila melanogaster euchromatic genome: a systematic review.</title>
        <authorList>
            <person name="Misra S."/>
            <person name="Crosby M.A."/>
            <person name="Mungall C.J."/>
            <person name="Matthews B.B."/>
            <person name="Campbell K.S."/>
            <person name="Hradecky P."/>
            <person name="Huang Y."/>
            <person name="Kaminker J.S."/>
            <person name="Millburn G.H."/>
            <person name="Prochnik S.E."/>
            <person name="Smith C.D."/>
            <person name="Tupy J.L."/>
            <person name="Whitfield E.J."/>
            <person name="Bayraktaroglu L."/>
            <person name="Berman B.P."/>
            <person name="Bettencourt B.R."/>
            <person name="Celniker S.E."/>
            <person name="de Grey A.D.N.J."/>
            <person name="Drysdale R.A."/>
            <person name="Harris N.L."/>
            <person name="Richter J."/>
            <person name="Russo S."/>
            <person name="Schroeder A.J."/>
            <person name="Shu S.Q."/>
            <person name="Stapleton M."/>
            <person name="Yamada C."/>
            <person name="Ashburner M."/>
            <person name="Gelbart W.M."/>
            <person name="Rubin G.M."/>
            <person name="Lewis S.E."/>
        </authorList>
    </citation>
    <scope>GENOME REANNOTATION</scope>
    <source>
        <strain>Berkeley</strain>
    </source>
</reference>
<feature type="chain" id="PRO_0000234380" description="Probable lysine-specific demethylase 4B">
    <location>
        <begin position="1"/>
        <end position="590"/>
    </location>
</feature>
<feature type="domain" description="JmjN" evidence="4">
    <location>
        <begin position="9"/>
        <end position="51"/>
    </location>
</feature>
<feature type="domain" description="JmjC" evidence="5">
    <location>
        <begin position="140"/>
        <end position="306"/>
    </location>
</feature>
<feature type="region of interest" description="Disordered" evidence="6">
    <location>
        <begin position="372"/>
        <end position="395"/>
    </location>
</feature>
<feature type="region of interest" description="Disordered" evidence="6">
    <location>
        <begin position="417"/>
        <end position="590"/>
    </location>
</feature>
<feature type="compositionally biased region" description="Acidic residues" evidence="6">
    <location>
        <begin position="445"/>
        <end position="458"/>
    </location>
</feature>
<feature type="compositionally biased region" description="Basic residues" evidence="6">
    <location>
        <begin position="480"/>
        <end position="494"/>
    </location>
</feature>
<feature type="compositionally biased region" description="Low complexity" evidence="6">
    <location>
        <begin position="502"/>
        <end position="513"/>
    </location>
</feature>
<feature type="compositionally biased region" description="Low complexity" evidence="6">
    <location>
        <begin position="537"/>
        <end position="571"/>
    </location>
</feature>
<feature type="binding site" evidence="2">
    <location>
        <position position="130"/>
    </location>
    <ligand>
        <name>2-oxoglutarate</name>
        <dbReference type="ChEBI" id="CHEBI:16810"/>
    </ligand>
</feature>
<feature type="binding site" evidence="5">
    <location>
        <position position="186"/>
    </location>
    <ligand>
        <name>Fe cation</name>
        <dbReference type="ChEBI" id="CHEBI:24875"/>
        <note>catalytic</note>
    </ligand>
</feature>
<feature type="binding site" evidence="5">
    <location>
        <position position="188"/>
    </location>
    <ligand>
        <name>Fe cation</name>
        <dbReference type="ChEBI" id="CHEBI:24875"/>
        <note>catalytic</note>
    </ligand>
</feature>
<feature type="binding site" evidence="1">
    <location>
        <position position="196"/>
    </location>
    <ligand>
        <name>2-oxoglutarate</name>
        <dbReference type="ChEBI" id="CHEBI:16810"/>
    </ligand>
</feature>
<feature type="binding site" evidence="2">
    <location>
        <position position="204"/>
    </location>
    <ligand>
        <name>2-oxoglutarate</name>
        <dbReference type="ChEBI" id="CHEBI:16810"/>
    </ligand>
</feature>
<feature type="binding site" evidence="1">
    <location>
        <position position="232"/>
    </location>
    <ligand>
        <name>Zn(2+)</name>
        <dbReference type="ChEBI" id="CHEBI:29105"/>
    </ligand>
</feature>
<feature type="binding site" evidence="1">
    <location>
        <position position="238"/>
    </location>
    <ligand>
        <name>Zn(2+)</name>
        <dbReference type="ChEBI" id="CHEBI:29105"/>
    </ligand>
</feature>
<feature type="binding site" evidence="2">
    <location>
        <position position="239"/>
    </location>
    <ligand>
        <name>2-oxoglutarate</name>
        <dbReference type="ChEBI" id="CHEBI:16810"/>
    </ligand>
</feature>
<feature type="binding site" evidence="5">
    <location>
        <position position="274"/>
    </location>
    <ligand>
        <name>Fe cation</name>
        <dbReference type="ChEBI" id="CHEBI:24875"/>
        <note>catalytic</note>
    </ligand>
</feature>
<feature type="binding site" evidence="1">
    <location>
        <position position="304"/>
    </location>
    <ligand>
        <name>Zn(2+)</name>
        <dbReference type="ChEBI" id="CHEBI:29105"/>
    </ligand>
</feature>
<feature type="binding site" evidence="1">
    <location>
        <position position="306"/>
    </location>
    <ligand>
        <name>Zn(2+)</name>
        <dbReference type="ChEBI" id="CHEBI:29105"/>
    </ligand>
</feature>
<keyword id="KW-0156">Chromatin regulator</keyword>
<keyword id="KW-0223">Dioxygenase</keyword>
<keyword id="KW-0408">Iron</keyword>
<keyword id="KW-0479">Metal-binding</keyword>
<keyword id="KW-0539">Nucleus</keyword>
<keyword id="KW-0560">Oxidoreductase</keyword>
<keyword id="KW-1185">Reference proteome</keyword>
<keyword id="KW-0804">Transcription</keyword>
<keyword id="KW-0805">Transcription regulation</keyword>
<keyword id="KW-0862">Zinc</keyword>
<evidence type="ECO:0000250" key="1"/>
<evidence type="ECO:0000250" key="2">
    <source>
        <dbReference type="UniProtKB" id="B2RXH2"/>
    </source>
</evidence>
<evidence type="ECO:0000250" key="3">
    <source>
        <dbReference type="UniProtKB" id="O94953"/>
    </source>
</evidence>
<evidence type="ECO:0000255" key="4">
    <source>
        <dbReference type="PROSITE-ProRule" id="PRU00537"/>
    </source>
</evidence>
<evidence type="ECO:0000255" key="5">
    <source>
        <dbReference type="PROSITE-ProRule" id="PRU00538"/>
    </source>
</evidence>
<evidence type="ECO:0000256" key="6">
    <source>
        <dbReference type="SAM" id="MobiDB-lite"/>
    </source>
</evidence>
<evidence type="ECO:0000305" key="7"/>
<proteinExistence type="inferred from homology"/>
<accession>Q9V6L0</accession>
<organism>
    <name type="scientific">Drosophila melanogaster</name>
    <name type="common">Fruit fly</name>
    <dbReference type="NCBI Taxonomy" id="7227"/>
    <lineage>
        <taxon>Eukaryota</taxon>
        <taxon>Metazoa</taxon>
        <taxon>Ecdysozoa</taxon>
        <taxon>Arthropoda</taxon>
        <taxon>Hexapoda</taxon>
        <taxon>Insecta</taxon>
        <taxon>Pterygota</taxon>
        <taxon>Neoptera</taxon>
        <taxon>Endopterygota</taxon>
        <taxon>Diptera</taxon>
        <taxon>Brachycera</taxon>
        <taxon>Muscomorpha</taxon>
        <taxon>Ephydroidea</taxon>
        <taxon>Drosophilidae</taxon>
        <taxon>Drosophila</taxon>
        <taxon>Sophophora</taxon>
    </lineage>
</organism>
<comment type="function">
    <text evidence="1">Probable histone demethylase that specifically demethylates 'Lys-9' and 'Lys-36' residues of histone H3, thereby playing a central role in histone code. Demethylation of Lys residue generates formaldehyde and succinate (By similarity).</text>
</comment>
<comment type="catalytic activity">
    <reaction evidence="3">
        <text>N(6),N(6),N(6)-trimethyl-L-lysyl(9)-[histone H3] + 2 2-oxoglutarate + 2 O2 = N(6)-methyl-L-lysyl(9)-[histone H3] + 2 formaldehyde + 2 succinate + 2 CO2</text>
        <dbReference type="Rhea" id="RHEA:60200"/>
        <dbReference type="Rhea" id="RHEA-COMP:15538"/>
        <dbReference type="Rhea" id="RHEA-COMP:15542"/>
        <dbReference type="ChEBI" id="CHEBI:15379"/>
        <dbReference type="ChEBI" id="CHEBI:16526"/>
        <dbReference type="ChEBI" id="CHEBI:16810"/>
        <dbReference type="ChEBI" id="CHEBI:16842"/>
        <dbReference type="ChEBI" id="CHEBI:30031"/>
        <dbReference type="ChEBI" id="CHEBI:61929"/>
        <dbReference type="ChEBI" id="CHEBI:61961"/>
        <dbReference type="EC" id="1.14.11.66"/>
    </reaction>
</comment>
<comment type="cofactor">
    <cofactor evidence="1">
        <name>Fe(2+)</name>
        <dbReference type="ChEBI" id="CHEBI:29033"/>
    </cofactor>
    <text evidence="1">Binds 1 Fe(2+) ion per subunit.</text>
</comment>
<comment type="subcellular location">
    <subcellularLocation>
        <location evidence="4">Nucleus</location>
    </subcellularLocation>
</comment>
<comment type="similarity">
    <text evidence="7">Belongs to the JHDM3 histone demethylase family.</text>
</comment>
<gene>
    <name type="primary">Kdm4B</name>
    <name type="ORF">CG33182</name>
</gene>
<protein>
    <recommendedName>
        <fullName>Probable lysine-specific demethylase 4B</fullName>
        <ecNumber evidence="3">1.14.11.66</ecNumber>
    </recommendedName>
    <alternativeName>
        <fullName>Probable JmjC domain-containing histone demethylation protein 3B</fullName>
    </alternativeName>
    <alternativeName>
        <fullName evidence="7">Probable [histone H3]-trimethyl-L-lysine(9) demethylase 4B</fullName>
    </alternativeName>
</protein>